<protein>
    <recommendedName>
        <fullName>Uncharacterized DapA-like lyase</fullName>
        <ecNumber>4.-.-.-</ecNumber>
    </recommendedName>
</protein>
<evidence type="ECO:0000250" key="1"/>
<evidence type="ECO:0000269" key="2">
    <source>
    </source>
</evidence>
<evidence type="ECO:0000305" key="3"/>
<dbReference type="EC" id="4.-.-.-"/>
<dbReference type="EMBL" id="AJ222715">
    <property type="protein sequence ID" value="CAA10957.1"/>
    <property type="molecule type" value="Genomic_DNA"/>
</dbReference>
<dbReference type="SMR" id="O69782"/>
<dbReference type="GO" id="GO:0005737">
    <property type="term" value="C:cytoplasm"/>
    <property type="evidence" value="ECO:0007669"/>
    <property type="project" value="UniProtKB-SubCell"/>
</dbReference>
<dbReference type="GO" id="GO:0008840">
    <property type="term" value="F:4-hydroxy-tetrahydrodipicolinate synthase activity"/>
    <property type="evidence" value="ECO:0007669"/>
    <property type="project" value="TreeGrafter"/>
</dbReference>
<dbReference type="GO" id="GO:0044281">
    <property type="term" value="P:small molecule metabolic process"/>
    <property type="evidence" value="ECO:0007669"/>
    <property type="project" value="UniProtKB-ARBA"/>
</dbReference>
<dbReference type="CDD" id="cd00408">
    <property type="entry name" value="DHDPS-like"/>
    <property type="match status" value="1"/>
</dbReference>
<dbReference type="Gene3D" id="3.20.20.70">
    <property type="entry name" value="Aldolase class I"/>
    <property type="match status" value="1"/>
</dbReference>
<dbReference type="InterPro" id="IPR013785">
    <property type="entry name" value="Aldolase_TIM"/>
</dbReference>
<dbReference type="InterPro" id="IPR002220">
    <property type="entry name" value="DapA-like"/>
</dbReference>
<dbReference type="InterPro" id="IPR020625">
    <property type="entry name" value="Schiff_base-form_aldolases_AS"/>
</dbReference>
<dbReference type="PANTHER" id="PTHR12128:SF66">
    <property type="entry name" value="4-HYDROXY-2-OXOGLUTARATE ALDOLASE, MITOCHONDRIAL"/>
    <property type="match status" value="1"/>
</dbReference>
<dbReference type="PANTHER" id="PTHR12128">
    <property type="entry name" value="DIHYDRODIPICOLINATE SYNTHASE"/>
    <property type="match status" value="1"/>
</dbReference>
<dbReference type="Pfam" id="PF00701">
    <property type="entry name" value="DHDPS"/>
    <property type="match status" value="1"/>
</dbReference>
<dbReference type="PIRSF" id="PIRSF001365">
    <property type="entry name" value="DHDPS"/>
    <property type="match status" value="1"/>
</dbReference>
<dbReference type="PRINTS" id="PR00146">
    <property type="entry name" value="DHPICSNTHASE"/>
</dbReference>
<dbReference type="SMART" id="SM01130">
    <property type="entry name" value="DHDPS"/>
    <property type="match status" value="1"/>
</dbReference>
<dbReference type="SUPFAM" id="SSF51569">
    <property type="entry name" value="Aldolase"/>
    <property type="match status" value="1"/>
</dbReference>
<dbReference type="PROSITE" id="PS00666">
    <property type="entry name" value="DHDPS_2"/>
    <property type="match status" value="1"/>
</dbReference>
<gene>
    <name type="primary">dapAL</name>
</gene>
<name>DAPAL_RHIML</name>
<organism>
    <name type="scientific">Rhizobium meliloti</name>
    <name type="common">Ensifer meliloti</name>
    <name type="synonym">Sinorhizobium meliloti</name>
    <dbReference type="NCBI Taxonomy" id="382"/>
    <lineage>
        <taxon>Bacteria</taxon>
        <taxon>Pseudomonadati</taxon>
        <taxon>Pseudomonadota</taxon>
        <taxon>Alphaproteobacteria</taxon>
        <taxon>Hyphomicrobiales</taxon>
        <taxon>Rhizobiaceae</taxon>
        <taxon>Sinorhizobium/Ensifer group</taxon>
        <taxon>Sinorhizobium</taxon>
    </lineage>
</organism>
<accession>O69782</accession>
<sequence length="300" mass="32297">MALRTDWNGVFPAMVTPFRENGSFDEASFKALIELYISEGVKGVVVTGSTGEWYSMSDAERATVWEVAVEASSGRITVIAGTSAVGTREALALTRTAKAVGVDGCMLLPPGGIFAARNEVVNYFHTLAGVGLPIMVYNNPPRTGVNMDADMVAEIAKSEEIVSFKDINRYLYAASEIIYRVCDKLAVFTGLEPYASSVLPRGAVGVVSTISNICAANMVSYYNAVISGDSATAYKTQKLIDQLYHFLPTLGAPAFVSVKAAMKLLGRPGGEIRLPHLPANEALIGKLREELRRLKMMTLN</sequence>
<geneLocation type="plasmid">
    <name>pRmeGR4b</name>
</geneLocation>
<feature type="chain" id="PRO_0000103142" description="Uncharacterized DapA-like lyase">
    <location>
        <begin position="1"/>
        <end position="300"/>
    </location>
</feature>
<feature type="active site" description="Charge relay system" evidence="1">
    <location>
        <position position="49"/>
    </location>
</feature>
<feature type="active site" description="Proton donor" evidence="1">
    <location>
        <position position="137"/>
    </location>
</feature>
<feature type="active site" description="Schiff-base intermediate with substrate" evidence="1">
    <location>
        <position position="165"/>
    </location>
</feature>
<feature type="site" description="Involved in proton transfer during cleavage" evidence="1">
    <location>
        <position position="137"/>
    </location>
</feature>
<proteinExistence type="evidence at transcript level"/>
<keyword id="KW-0963">Cytoplasm</keyword>
<keyword id="KW-0456">Lyase</keyword>
<keyword id="KW-0614">Plasmid</keyword>
<keyword id="KW-0704">Schiff base</keyword>
<comment type="function">
    <text>Upon expression in E.coli complements a dapA deletion mutation, but this may not be its physiological function.</text>
</comment>
<comment type="subunit">
    <text evidence="1">Homotetramer.</text>
</comment>
<comment type="subcellular location">
    <subcellularLocation>
        <location evidence="3">Cytoplasm</location>
    </subcellularLocation>
</comment>
<comment type="induction">
    <text evidence="2">Expressed in vegetatively growing cells and in nodules.</text>
</comment>
<comment type="similarity">
    <text evidence="3">Belongs to the DapA family.</text>
</comment>
<reference key="1">
    <citation type="journal article" date="2000" name="Arch. Microbiol.">
        <title>Characterization of the Sinorhizobium meliloti genes encoding a functional dihydrodipicolinate synthase (dapA) and dihydrodipicolinate reductase (dapB).</title>
        <authorList>
            <person name="Garcia-Rodriguez F.M."/>
            <person name="Zekri S."/>
            <person name="Toro N."/>
        </authorList>
    </citation>
    <scope>NUCLEOTIDE SEQUENCE [GENOMIC DNA]</scope>
    <scope>INDUCTION</scope>
    <scope>EXPRESSION IN E.COLI</scope>
    <source>
        <strain>GR4</strain>
    </source>
</reference>